<accession>Q9WX71</accession>
<evidence type="ECO:0000250" key="1"/>
<evidence type="ECO:0000255" key="2"/>
<evidence type="ECO:0000305" key="3"/>
<feature type="signal peptide" evidence="2">
    <location>
        <begin position="1"/>
        <end position="55"/>
    </location>
</feature>
<feature type="chain" id="PRO_0000035689" description="Cellulose synthase 2 operon protein C">
    <location>
        <begin position="56"/>
        <end position="1307"/>
    </location>
</feature>
<feature type="repeat" description="TPR 1">
    <location>
        <begin position="97"/>
        <end position="130"/>
    </location>
</feature>
<feature type="repeat" description="TPR 2">
    <location>
        <begin position="270"/>
        <end position="303"/>
    </location>
</feature>
<feature type="repeat" description="TPR 3">
    <location>
        <begin position="339"/>
        <end position="372"/>
    </location>
</feature>
<feature type="repeat" description="TPR 4">
    <location>
        <begin position="374"/>
        <end position="406"/>
    </location>
</feature>
<feature type="repeat" description="TPR 5">
    <location>
        <begin position="458"/>
        <end position="491"/>
    </location>
</feature>
<feature type="repeat" description="TPR 6">
    <location>
        <begin position="493"/>
        <end position="525"/>
    </location>
</feature>
<feature type="repeat" description="TPR 7">
    <location>
        <begin position="528"/>
        <end position="561"/>
    </location>
</feature>
<feature type="repeat" description="TPR 8">
    <location>
        <begin position="754"/>
        <end position="787"/>
    </location>
</feature>
<feature type="repeat" description="TPR 9">
    <location>
        <begin position="788"/>
        <end position="821"/>
    </location>
</feature>
<comment type="function">
    <text evidence="1">Required for maximal bacterial cellulose synthesis.</text>
</comment>
<comment type="pathway">
    <text>Glycan metabolism; bacterial cellulose biosynthesis.</text>
</comment>
<comment type="subcellular location">
    <subcellularLocation>
        <location evidence="3">Cell outer membrane</location>
        <topology evidence="3">Peripheral membrane protein</topology>
    </subcellularLocation>
</comment>
<comment type="similarity">
    <text evidence="3">Belongs to the AcsC/BcsC family.</text>
</comment>
<sequence length="1307" mass="141287">MTRPRGPAPRDGAAWRRDPARRVLLRDAVRGREGGLRLACAVMAGLIVSGGVACAQDSHMAVAGAPATAVAPPGQPAPMPPATVADAAHLAHAAAVLELLLDQGYYWLGQHNLGKAHETIQRALSIEPDNNEALFLQGRLQMAEGGTTQATRTLERLERQGAPAGLVAQLKAQIQAGPVDPRALAEARALAASGRMMPAMFKYKALFRNGDPPPDLALEYYRVLGATILGYQEARTRLAAWVARNPRDIDARLCLDRILTYRVTSRAEGLDGLRALARSNVSAQIRSDAVAAWRDALLWEPITGQSIPLYDEWLAQHPDDTEFTIRLKKAQETQAGVDAANDRQQGYALLSRHMLDAAAREFHRAVDIDPHDPDALGGLGLVAQARQQPALARQYFLQAMQAGPDAAGHWRAALKALETGGGGVDPLVARIVQAINAGRYDAARADLATLGRRPGYGLTVLSLQAALARRQGDTADAVRLYREVVRRAPRDAGALFSLGALDVQVGDATEAADILTRLQRLAPAMARRLEAMMLSAQADRAGDDDGRIALLRRAQALDPDDPWVRLKLAHALDDAGDHAAAQAMMDALTAPRNASAQALQAGIIYAMGRHDTATAGALLERMPRTGRTPDMDRLASLVVLDQRIAALNHAPVAGNAAVLALADQPDPTGERGMRIAAALLARHAPQDARQALARGESLTQPPTPARMLAYAGTYLRLRSAFDTTRCLDAFDAMAKARPADVTADQARARQQVAIGLAIMTADGFDRYGRTAQAAQVLAPVLRAHPDSVEAHLAMGRVYQTRNMATRALEEDETALRLKPANIYALAAAARDAGGAHHLAQAKGYATRLAHEDPDGPMSWEVRSDIERIEGNSRGQLADVEHARHAQCTLDGEGECGGHESFVSDYRWPLIDSEYMDLHGATLPASYHYIPEDDGAQAMDRQIVYLRDSVSPQFDANTFVRSRTGVAGLGQLTEFAVPITATLPFESWDHRLSFSVTPTLLFTGDPLTNAVSAHQFGTVAVNGARPWGYHHYYTQGVGLSLNYVNRWFAADVGSSPLGFPITNVVGGLEFAPRLTRNLGLRISGGRRMVTDSELSYAGERDPGTGKLWGGVTRLFGHGALEWSARGWNAYAGGGFAYLGGTNVIGNTETEAGAGGSATVWQDHDRQWLRVGLDLMYFGYKRNAYFFTWGQGGYFSPRQYFGAMVPVEWSGHNRRWTWFLRGEAGYQYYHSNAAPYFPTSAQLQGQADGSPPSYYGDSGASGLAGNMRGRLVYQLDHRLRIGLEGGYSRAGSWSETSGMWMAHYTLDGQ</sequence>
<name>BCSC4_KOMXY</name>
<dbReference type="EMBL" id="AB015803">
    <property type="protein sequence ID" value="BAA77596.1"/>
    <property type="molecule type" value="Genomic_DNA"/>
</dbReference>
<dbReference type="UniPathway" id="UPA00694"/>
<dbReference type="GO" id="GO:0009279">
    <property type="term" value="C:cell outer membrane"/>
    <property type="evidence" value="ECO:0007669"/>
    <property type="project" value="UniProtKB-SubCell"/>
</dbReference>
<dbReference type="GO" id="GO:0030244">
    <property type="term" value="P:cellulose biosynthetic process"/>
    <property type="evidence" value="ECO:0007669"/>
    <property type="project" value="UniProtKB-KW"/>
</dbReference>
<dbReference type="GO" id="GO:0006011">
    <property type="term" value="P:UDP-alpha-D-glucose metabolic process"/>
    <property type="evidence" value="ECO:0007669"/>
    <property type="project" value="InterPro"/>
</dbReference>
<dbReference type="Gene3D" id="1.25.40.10">
    <property type="entry name" value="Tetratricopeptide repeat domain"/>
    <property type="match status" value="4"/>
</dbReference>
<dbReference type="InterPro" id="IPR008410">
    <property type="entry name" value="BCSC_C"/>
</dbReference>
<dbReference type="InterPro" id="IPR003921">
    <property type="entry name" value="Cell_synth_C"/>
</dbReference>
<dbReference type="InterPro" id="IPR051012">
    <property type="entry name" value="CellSynth/LPSAsmb/PSIAsmb"/>
</dbReference>
<dbReference type="InterPro" id="IPR011990">
    <property type="entry name" value="TPR-like_helical_dom_sf"/>
</dbReference>
<dbReference type="InterPro" id="IPR019734">
    <property type="entry name" value="TPR_rpt"/>
</dbReference>
<dbReference type="PANTHER" id="PTHR45586:SF1">
    <property type="entry name" value="LIPOPOLYSACCHARIDE ASSEMBLY PROTEIN B"/>
    <property type="match status" value="1"/>
</dbReference>
<dbReference type="PANTHER" id="PTHR45586">
    <property type="entry name" value="TPR REPEAT-CONTAINING PROTEIN PA4667"/>
    <property type="match status" value="1"/>
</dbReference>
<dbReference type="Pfam" id="PF05420">
    <property type="entry name" value="BCSC_C"/>
    <property type="match status" value="1"/>
</dbReference>
<dbReference type="Pfam" id="PF13432">
    <property type="entry name" value="TPR_16"/>
    <property type="match status" value="3"/>
</dbReference>
<dbReference type="Pfam" id="PF14559">
    <property type="entry name" value="TPR_19"/>
    <property type="match status" value="1"/>
</dbReference>
<dbReference type="PRINTS" id="PR01441">
    <property type="entry name" value="CELLSNTHASEC"/>
</dbReference>
<dbReference type="SMART" id="SM00028">
    <property type="entry name" value="TPR"/>
    <property type="match status" value="6"/>
</dbReference>
<dbReference type="SUPFAM" id="SSF48452">
    <property type="entry name" value="TPR-like"/>
    <property type="match status" value="2"/>
</dbReference>
<dbReference type="PROSITE" id="PS50005">
    <property type="entry name" value="TPR"/>
    <property type="match status" value="6"/>
</dbReference>
<dbReference type="PROSITE" id="PS50293">
    <property type="entry name" value="TPR_REGION"/>
    <property type="match status" value="4"/>
</dbReference>
<reference key="1">
    <citation type="journal article" date="1999" name="DNA Res.">
        <title>Cloning of cellulose synthase genes from Acetobacter xylinum JCM 7664: implication of a novel set of cellulose synthase genes.</title>
        <authorList>
            <person name="Umeda Y."/>
            <person name="Hirano A."/>
            <person name="Ishibashi M."/>
            <person name="Akiyama H."/>
            <person name="Onizuka T."/>
            <person name="Ikeuchi M."/>
            <person name="Inoue Y."/>
        </authorList>
    </citation>
    <scope>NUCLEOTIDE SEQUENCE [GENOMIC DNA]</scope>
    <source>
        <strain>JCM 7664 / NBRC 13693</strain>
    </source>
</reference>
<organism>
    <name type="scientific">Komagataeibacter xylinus</name>
    <name type="common">Gluconacetobacter xylinus</name>
    <dbReference type="NCBI Taxonomy" id="28448"/>
    <lineage>
        <taxon>Bacteria</taxon>
        <taxon>Pseudomonadati</taxon>
        <taxon>Pseudomonadota</taxon>
        <taxon>Alphaproteobacteria</taxon>
        <taxon>Acetobacterales</taxon>
        <taxon>Acetobacteraceae</taxon>
        <taxon>Komagataeibacter</taxon>
    </lineage>
</organism>
<keyword id="KW-0998">Cell outer membrane</keyword>
<keyword id="KW-0135">Cellulose biosynthesis</keyword>
<keyword id="KW-0472">Membrane</keyword>
<keyword id="KW-0677">Repeat</keyword>
<keyword id="KW-0732">Signal</keyword>
<keyword id="KW-0802">TPR repeat</keyword>
<protein>
    <recommendedName>
        <fullName>Cellulose synthase 2 operon protein C</fullName>
    </recommendedName>
</protein>
<proteinExistence type="inferred from homology"/>
<gene>
    <name type="primary">bcsCII</name>
</gene>